<evidence type="ECO:0000250" key="1"/>
<evidence type="ECO:0000305" key="2"/>
<accession>Q5WL39</accession>
<organism>
    <name type="scientific">Shouchella clausii (strain KSM-K16)</name>
    <name type="common">Alkalihalobacillus clausii</name>
    <dbReference type="NCBI Taxonomy" id="66692"/>
    <lineage>
        <taxon>Bacteria</taxon>
        <taxon>Bacillati</taxon>
        <taxon>Bacillota</taxon>
        <taxon>Bacilli</taxon>
        <taxon>Bacillales</taxon>
        <taxon>Bacillaceae</taxon>
        <taxon>Shouchella</taxon>
    </lineage>
</organism>
<protein>
    <recommendedName>
        <fullName>Bifunctional enzyme RhaA/RhaB</fullName>
    </recommendedName>
    <domain>
        <recommendedName>
            <fullName>Rhamnulokinase</fullName>
            <ecNumber>2.7.1.5</ecNumber>
        </recommendedName>
        <alternativeName>
            <fullName>Rhamnulose kinase</fullName>
        </alternativeName>
    </domain>
    <domain>
        <recommendedName>
            <fullName>L-rhamnose isomerase</fullName>
            <ecNumber>5.3.1.14</ecNumber>
        </recommendedName>
    </domain>
</protein>
<gene>
    <name type="primary">rhaAB</name>
    <name type="ordered locus">ABC0374</name>
</gene>
<sequence>MGEYRLAVDIGASSGRVMAGKISEAGIDLQEVYRFDNQAQLMGGHYCWDVDHLFGEIKKGIRVAVQSGLQPVSIGMNTWAVDFVLLDEKGERLTDAISYRDPRTNGVMEGVIETYGKKALYERTGIAFQPFNTLYQLLALKKQNPELLEQAHAFLMVPDYFHFLLTGVKVNEYTNATTTQLVNVHTKDWDRQLLKEFGLPCGMFQPLQHPGTKIGSLTESMEKELGVQLEVIVPATHDTASAIAALPEKQTSVYISSGTWSLIGIENRTPICSQQAMAANFTNEGGVGSRIRFLKNIMGLWMIQEVQRLLPGHWSFSQLAQAASESTYTGEIDVDQHRFLKPENMIEEIQQACREKGLAVPESPGDLAKCIYDSLIASYDKAVTEIEAISGKPYEQIHIIGGGALNKEINQRLANRTNKTVIAGPTEATAVGNLLVQAIADGELSRIEEGRALVRTAFPVTYFLPQRSESHVSSRFESAKVQYEQLGIDVEAAFAKVKQVPISVHCWQGDDLHGTEVIANELSGGIDVTGNHPGRARNGEELRRDLEKALSLIPGKHRVNLHAMYAETDSVPIERDQLKTEHFEKWVKWAKSLGIGLDFNPTVFSHPKAADGLTLAHPDEEIRTFWINHCKACRKIAAYFGEQLGTPSLVNIWVPDGYKDTPSDRLTPRKRLKESLDAIYADEYDPMLVLDTVESKLFGIGSEAYVVGSHEFYLNYANQNNKLYLLDTGHFHPTEVVSNKLSAMLLFHDQLALHVSRPVRWDSDHVVTFDDELREIAIELVRNDALGNIHIGLDFFDASINRVAAWAIGTRNMAKALLYAALMPHRHLKQLQDEGDFTSRLAMQEQLKTYPFGDMWDEYCKRQGVPTETEWLDVVKEYEQQVQLKRESEKAKQR</sequence>
<reference key="1">
    <citation type="submission" date="2003-10" db="EMBL/GenBank/DDBJ databases">
        <title>The complete genome sequence of the alkaliphilic Bacillus clausii KSM-K16.</title>
        <authorList>
            <person name="Takaki Y."/>
            <person name="Kageyama Y."/>
            <person name="Shimamura S."/>
            <person name="Suzuki H."/>
            <person name="Nishi S."/>
            <person name="Hatada Y."/>
            <person name="Kawai S."/>
            <person name="Ito S."/>
            <person name="Horikoshi K."/>
        </authorList>
    </citation>
    <scope>NUCLEOTIDE SEQUENCE [LARGE SCALE GENOMIC DNA]</scope>
    <source>
        <strain>KSM-K16</strain>
    </source>
</reference>
<name>RHAAB_SHOC1</name>
<dbReference type="EC" id="2.7.1.5"/>
<dbReference type="EC" id="5.3.1.14"/>
<dbReference type="EMBL" id="AP006627">
    <property type="protein sequence ID" value="BAD62916.1"/>
    <property type="molecule type" value="Genomic_DNA"/>
</dbReference>
<dbReference type="SMR" id="Q5WL39"/>
<dbReference type="STRING" id="66692.ABC0374"/>
<dbReference type="KEGG" id="bcl:ABC0374"/>
<dbReference type="eggNOG" id="COG1070">
    <property type="taxonomic scope" value="Bacteria"/>
</dbReference>
<dbReference type="eggNOG" id="COG4806">
    <property type="taxonomic scope" value="Bacteria"/>
</dbReference>
<dbReference type="HOGENOM" id="CLU_323306_0_0_9"/>
<dbReference type="UniPathway" id="UPA00541">
    <property type="reaction ID" value="UER00601"/>
</dbReference>
<dbReference type="UniPathway" id="UPA00541">
    <property type="reaction ID" value="UER00602"/>
</dbReference>
<dbReference type="Proteomes" id="UP000001168">
    <property type="component" value="Chromosome"/>
</dbReference>
<dbReference type="GO" id="GO:0005737">
    <property type="term" value="C:cytoplasm"/>
    <property type="evidence" value="ECO:0007669"/>
    <property type="project" value="UniProtKB-SubCell"/>
</dbReference>
<dbReference type="GO" id="GO:0005524">
    <property type="term" value="F:ATP binding"/>
    <property type="evidence" value="ECO:0007669"/>
    <property type="project" value="UniProtKB-KW"/>
</dbReference>
<dbReference type="GO" id="GO:0008740">
    <property type="term" value="F:L-rhamnose isomerase activity"/>
    <property type="evidence" value="ECO:0007669"/>
    <property type="project" value="UniProtKB-UniRule"/>
</dbReference>
<dbReference type="GO" id="GO:0030145">
    <property type="term" value="F:manganese ion binding"/>
    <property type="evidence" value="ECO:0007669"/>
    <property type="project" value="UniProtKB-UniRule"/>
</dbReference>
<dbReference type="GO" id="GO:0008993">
    <property type="term" value="F:rhamnulokinase activity"/>
    <property type="evidence" value="ECO:0007669"/>
    <property type="project" value="UniProtKB-EC"/>
</dbReference>
<dbReference type="GO" id="GO:0019324">
    <property type="term" value="P:L-lyxose metabolic process"/>
    <property type="evidence" value="ECO:0007669"/>
    <property type="project" value="TreeGrafter"/>
</dbReference>
<dbReference type="GO" id="GO:0019301">
    <property type="term" value="P:rhamnose catabolic process"/>
    <property type="evidence" value="ECO:0007669"/>
    <property type="project" value="UniProtKB-UniRule"/>
</dbReference>
<dbReference type="CDD" id="cd07771">
    <property type="entry name" value="ASKHA_NBD_FGGY_RhaB-like"/>
    <property type="match status" value="1"/>
</dbReference>
<dbReference type="Gene3D" id="3.30.420.40">
    <property type="match status" value="2"/>
</dbReference>
<dbReference type="Gene3D" id="3.20.20.150">
    <property type="entry name" value="Divalent-metal-dependent TIM barrel enzymes"/>
    <property type="match status" value="1"/>
</dbReference>
<dbReference type="HAMAP" id="MF_00541">
    <property type="entry name" value="RhaA"/>
    <property type="match status" value="1"/>
</dbReference>
<dbReference type="InterPro" id="IPR043129">
    <property type="entry name" value="ATPase_NBD"/>
</dbReference>
<dbReference type="InterPro" id="IPR018485">
    <property type="entry name" value="FGGY_C"/>
</dbReference>
<dbReference type="InterPro" id="IPR018484">
    <property type="entry name" value="FGGY_N"/>
</dbReference>
<dbReference type="InterPro" id="IPR050337">
    <property type="entry name" value="L-rhamnose_isomerase"/>
</dbReference>
<dbReference type="InterPro" id="IPR009308">
    <property type="entry name" value="Rhamnose_isomerase"/>
</dbReference>
<dbReference type="InterPro" id="IPR013449">
    <property type="entry name" value="Rhamnulokinase"/>
</dbReference>
<dbReference type="InterPro" id="IPR036237">
    <property type="entry name" value="Xyl_isomerase-like_sf"/>
</dbReference>
<dbReference type="NCBIfam" id="NF002203">
    <property type="entry name" value="PRK01076.1"/>
    <property type="match status" value="1"/>
</dbReference>
<dbReference type="NCBIfam" id="TIGR01748">
    <property type="entry name" value="rhaA"/>
    <property type="match status" value="1"/>
</dbReference>
<dbReference type="NCBIfam" id="TIGR02627">
    <property type="entry name" value="rhamnulo_kin"/>
    <property type="match status" value="1"/>
</dbReference>
<dbReference type="PANTHER" id="PTHR30268">
    <property type="entry name" value="L-RHAMNOSE ISOMERASE"/>
    <property type="match status" value="1"/>
</dbReference>
<dbReference type="PANTHER" id="PTHR30268:SF0">
    <property type="entry name" value="L-RHAMNOSE ISOMERASE"/>
    <property type="match status" value="1"/>
</dbReference>
<dbReference type="Pfam" id="PF02782">
    <property type="entry name" value="FGGY_C"/>
    <property type="match status" value="1"/>
</dbReference>
<dbReference type="Pfam" id="PF00370">
    <property type="entry name" value="FGGY_N"/>
    <property type="match status" value="1"/>
</dbReference>
<dbReference type="Pfam" id="PF06134">
    <property type="entry name" value="RhaA"/>
    <property type="match status" value="1"/>
</dbReference>
<dbReference type="SUPFAM" id="SSF53067">
    <property type="entry name" value="Actin-like ATPase domain"/>
    <property type="match status" value="2"/>
</dbReference>
<dbReference type="SUPFAM" id="SSF51658">
    <property type="entry name" value="Xylose isomerase-like"/>
    <property type="match status" value="1"/>
</dbReference>
<comment type="catalytic activity">
    <reaction>
        <text>L-rhamnulose + ATP = L-rhamnulose 1-phosphate + ADP + H(+)</text>
        <dbReference type="Rhea" id="RHEA:20117"/>
        <dbReference type="ChEBI" id="CHEBI:15378"/>
        <dbReference type="ChEBI" id="CHEBI:17897"/>
        <dbReference type="ChEBI" id="CHEBI:30616"/>
        <dbReference type="ChEBI" id="CHEBI:58313"/>
        <dbReference type="ChEBI" id="CHEBI:456216"/>
        <dbReference type="EC" id="2.7.1.5"/>
    </reaction>
</comment>
<comment type="catalytic activity">
    <reaction>
        <text>L-rhamnopyranose = L-rhamnulose</text>
        <dbReference type="Rhea" id="RHEA:23160"/>
        <dbReference type="ChEBI" id="CHEBI:17897"/>
        <dbReference type="ChEBI" id="CHEBI:62346"/>
        <dbReference type="EC" id="5.3.1.14"/>
    </reaction>
</comment>
<comment type="cofactor">
    <cofactor evidence="1">
        <name>Mn(2+)</name>
        <dbReference type="ChEBI" id="CHEBI:29035"/>
    </cofactor>
    <text evidence="1">Binds 1 Mn(2+) ion per subunit.</text>
</comment>
<comment type="pathway">
    <text>Carbohydrate degradation; L-rhamnose degradation; glycerone phosphate from L-rhamnose: step 1/3.</text>
</comment>
<comment type="pathway">
    <text>Carbohydrate degradation; L-rhamnose degradation; glycerone phosphate from L-rhamnose: step 2/3.</text>
</comment>
<comment type="subcellular location">
    <subcellularLocation>
        <location evidence="1">Cytoplasm</location>
    </subcellularLocation>
</comment>
<comment type="similarity">
    <text evidence="2">In the N-terminal section; belongs to the rhamnulokinase family.</text>
</comment>
<comment type="similarity">
    <text evidence="2">In the C-terminal section; belongs to the rhamnose isomerase family.</text>
</comment>
<feature type="chain" id="PRO_0000090570" description="Bifunctional enzyme RhaA/RhaB">
    <location>
        <begin position="1"/>
        <end position="894"/>
    </location>
</feature>
<feature type="region of interest" description="Rhamnulokinase">
    <location>
        <begin position="1"/>
        <end position="465"/>
    </location>
</feature>
<feature type="region of interest" description="L-rhamnose isomerase">
    <location>
        <begin position="466"/>
        <end position="894"/>
    </location>
</feature>
<feature type="binding site" evidence="1">
    <location>
        <position position="730"/>
    </location>
    <ligand>
        <name>Mn(2+)</name>
        <dbReference type="ChEBI" id="CHEBI:29035"/>
    </ligand>
</feature>
<feature type="binding site" evidence="1">
    <location>
        <position position="762"/>
    </location>
    <ligand>
        <name>Mn(2+)</name>
        <dbReference type="ChEBI" id="CHEBI:29035"/>
    </ligand>
</feature>
<feature type="binding site" evidence="1">
    <location>
        <position position="764"/>
    </location>
    <ligand>
        <name>Mn(2+)</name>
        <dbReference type="ChEBI" id="CHEBI:29035"/>
    </ligand>
</feature>
<keyword id="KW-0067">ATP-binding</keyword>
<keyword id="KW-0963">Cytoplasm</keyword>
<keyword id="KW-0413">Isomerase</keyword>
<keyword id="KW-0418">Kinase</keyword>
<keyword id="KW-0464">Manganese</keyword>
<keyword id="KW-0479">Metal-binding</keyword>
<keyword id="KW-0511">Multifunctional enzyme</keyword>
<keyword id="KW-0547">Nucleotide-binding</keyword>
<keyword id="KW-1185">Reference proteome</keyword>
<keyword id="KW-0684">Rhamnose metabolism</keyword>
<keyword id="KW-0808">Transferase</keyword>
<proteinExistence type="inferred from homology"/>